<reference key="1">
    <citation type="journal article" date="2009" name="Nat. Genet.">
        <title>Comparative genomic and phylogeographic analysis of Mycobacterium leprae.</title>
        <authorList>
            <person name="Monot M."/>
            <person name="Honore N."/>
            <person name="Garnier T."/>
            <person name="Zidane N."/>
            <person name="Sherafi D."/>
            <person name="Paniz-Mondolfi A."/>
            <person name="Matsuoka M."/>
            <person name="Taylor G.M."/>
            <person name="Donoghue H.D."/>
            <person name="Bouwman A."/>
            <person name="Mays S."/>
            <person name="Watson C."/>
            <person name="Lockwood D."/>
            <person name="Khamispour A."/>
            <person name="Dowlati Y."/>
            <person name="Jianping S."/>
            <person name="Rea T.H."/>
            <person name="Vera-Cabrera L."/>
            <person name="Stefani M.M."/>
            <person name="Banu S."/>
            <person name="Macdonald M."/>
            <person name="Sapkota B.R."/>
            <person name="Spencer J.S."/>
            <person name="Thomas J."/>
            <person name="Harshman K."/>
            <person name="Singh P."/>
            <person name="Busso P."/>
            <person name="Gattiker A."/>
            <person name="Rougemont J."/>
            <person name="Brennan P.J."/>
            <person name="Cole S.T."/>
        </authorList>
    </citation>
    <scope>NUCLEOTIDE SEQUENCE [LARGE SCALE GENOMIC DNA]</scope>
    <source>
        <strain>Br4923</strain>
    </source>
</reference>
<reference key="2">
    <citation type="journal article" date="2015" name="Tuberculosis">
        <title>Increasing the structural coverage of tuberculosis drug targets.</title>
        <authorList>
            <person name="Baugh L."/>
            <person name="Phan I."/>
            <person name="Begley D.W."/>
            <person name="Clifton M.C."/>
            <person name="Armour B."/>
            <person name="Dranow D.M."/>
            <person name="Taylor B.M."/>
            <person name="Muruthi M.M."/>
            <person name="Abendroth J."/>
            <person name="Fairman J.W."/>
            <person name="Fox D. III"/>
            <person name="Dieterich S.H."/>
            <person name="Staker B.L."/>
            <person name="Gardberg A.S."/>
            <person name="Choi R."/>
            <person name="Hewitt S.N."/>
            <person name="Napuli A.J."/>
            <person name="Myers J."/>
            <person name="Barrett L.K."/>
            <person name="Zhang Y."/>
            <person name="Ferrell M."/>
            <person name="Mundt E."/>
            <person name="Thompkins K."/>
            <person name="Tran N."/>
            <person name="Lyons-Abbott S."/>
            <person name="Abramov A."/>
            <person name="Sekar A."/>
            <person name="Serbzhinskiy D."/>
            <person name="Lorimer D."/>
            <person name="Buchko G.W."/>
            <person name="Stacy R."/>
            <person name="Stewart L.J."/>
            <person name="Edwards T.E."/>
            <person name="Van Voorhis W.C."/>
            <person name="Myler P.J."/>
        </authorList>
    </citation>
    <scope>X-RAY CRYSTALLOGRAPHY (2.45 ANGSTROMS)</scope>
</reference>
<sequence>MQQGNTATLILLRHGESDWNARNLFTGWVDVGLTDKGRAEAVRSGELLAEHNLLPDVLYTSLLRRAITTAHLALDTADWLWIPVRRSWRLNERHYGALQGLDKAVTKARYGEERFMAWRRSYDTPPPPIEKGSEFSQDADPRYTDIGGGPLTECLADVVTRFLPYFTDVIVPDLRTGRTVLIVAHGNSLRALVKHLDEMSDDEVVGLNVPTGIPLRYDLDADLRPVVPGGTYLDPEAAAAVISQARP</sequence>
<comment type="function">
    <text evidence="2">Catalyzes the interconversion of 2-phosphoglycerate and 3-phosphoglycerate.</text>
</comment>
<comment type="catalytic activity">
    <reaction evidence="2">
        <text>(2R)-2-phosphoglycerate = (2R)-3-phosphoglycerate</text>
        <dbReference type="Rhea" id="RHEA:15901"/>
        <dbReference type="ChEBI" id="CHEBI:58272"/>
        <dbReference type="ChEBI" id="CHEBI:58289"/>
        <dbReference type="EC" id="5.4.2.11"/>
    </reaction>
</comment>
<comment type="pathway">
    <text evidence="2">Carbohydrate degradation; glycolysis; pyruvate from D-glyceraldehyde 3-phosphate: step 3/5.</text>
</comment>
<comment type="subunit">
    <text evidence="1">Homotetramer, dimer of dimers.</text>
</comment>
<comment type="similarity">
    <text evidence="2">Belongs to the phosphoglycerate mutase family. BPG-dependent PGAM subfamily.</text>
</comment>
<protein>
    <recommendedName>
        <fullName evidence="2">2,3-bisphosphoglycerate-dependent phosphoglycerate mutase</fullName>
        <shortName evidence="2">BPG-dependent PGAM</shortName>
        <shortName evidence="2">PGAM</shortName>
        <shortName evidence="2">Phosphoglyceromutase</shortName>
        <shortName evidence="2">dPGM</shortName>
        <ecNumber evidence="2">5.4.2.11</ecNumber>
    </recommendedName>
</protein>
<proteinExistence type="evidence at protein level"/>
<evidence type="ECO:0000250" key="1">
    <source>
        <dbReference type="UniProtKB" id="P9WIC9"/>
    </source>
</evidence>
<evidence type="ECO:0000255" key="2">
    <source>
        <dbReference type="HAMAP-Rule" id="MF_01039"/>
    </source>
</evidence>
<evidence type="ECO:0007829" key="3">
    <source>
        <dbReference type="PDB" id="4EO9"/>
    </source>
</evidence>
<name>GPMA_MYCLB</name>
<gene>
    <name evidence="2" type="primary">gpmA</name>
    <name type="ordered locus">MLBr02441</name>
</gene>
<organism>
    <name type="scientific">Mycobacterium leprae (strain Br4923)</name>
    <dbReference type="NCBI Taxonomy" id="561304"/>
    <lineage>
        <taxon>Bacteria</taxon>
        <taxon>Bacillati</taxon>
        <taxon>Actinomycetota</taxon>
        <taxon>Actinomycetes</taxon>
        <taxon>Mycobacteriales</taxon>
        <taxon>Mycobacteriaceae</taxon>
        <taxon>Mycobacterium</taxon>
    </lineage>
</organism>
<accession>B8ZT86</accession>
<feature type="chain" id="PRO_1000149524" description="2,3-bisphosphoglycerate-dependent phosphoglycerate mutase">
    <location>
        <begin position="1"/>
        <end position="247"/>
    </location>
</feature>
<feature type="active site" description="Tele-phosphohistidine intermediate" evidence="2">
    <location>
        <position position="14"/>
    </location>
</feature>
<feature type="active site" description="Proton donor/acceptor" evidence="2">
    <location>
        <position position="92"/>
    </location>
</feature>
<feature type="binding site" evidence="2">
    <location>
        <begin position="13"/>
        <end position="20"/>
    </location>
    <ligand>
        <name>substrate</name>
    </ligand>
</feature>
<feature type="binding site" evidence="2">
    <location>
        <begin position="26"/>
        <end position="27"/>
    </location>
    <ligand>
        <name>substrate</name>
    </ligand>
</feature>
<feature type="binding site" evidence="2">
    <location>
        <position position="65"/>
    </location>
    <ligand>
        <name>substrate</name>
    </ligand>
</feature>
<feature type="binding site" evidence="2">
    <location>
        <begin position="92"/>
        <end position="95"/>
    </location>
    <ligand>
        <name>substrate</name>
    </ligand>
</feature>
<feature type="binding site" evidence="2">
    <location>
        <position position="103"/>
    </location>
    <ligand>
        <name>substrate</name>
    </ligand>
</feature>
<feature type="binding site" evidence="2">
    <location>
        <begin position="119"/>
        <end position="120"/>
    </location>
    <ligand>
        <name>substrate</name>
    </ligand>
</feature>
<feature type="binding site" evidence="2">
    <location>
        <begin position="186"/>
        <end position="187"/>
    </location>
    <ligand>
        <name>substrate</name>
    </ligand>
</feature>
<feature type="site" description="Transition state stabilizer" evidence="2">
    <location>
        <position position="185"/>
    </location>
</feature>
<feature type="strand" evidence="3">
    <location>
        <begin position="7"/>
        <end position="13"/>
    </location>
</feature>
<feature type="helix" evidence="3">
    <location>
        <begin position="18"/>
        <end position="21"/>
    </location>
</feature>
<feature type="helix" evidence="3">
    <location>
        <begin position="35"/>
        <end position="50"/>
    </location>
</feature>
<feature type="strand" evidence="3">
    <location>
        <begin position="56"/>
        <end position="60"/>
    </location>
</feature>
<feature type="helix" evidence="3">
    <location>
        <begin position="64"/>
        <end position="76"/>
    </location>
</feature>
<feature type="strand" evidence="3">
    <location>
        <begin position="84"/>
        <end position="86"/>
    </location>
</feature>
<feature type="helix" evidence="3">
    <location>
        <begin position="88"/>
        <end position="90"/>
    </location>
</feature>
<feature type="helix" evidence="3">
    <location>
        <begin position="96"/>
        <end position="98"/>
    </location>
</feature>
<feature type="helix" evidence="3">
    <location>
        <begin position="103"/>
        <end position="110"/>
    </location>
</feature>
<feature type="helix" evidence="3">
    <location>
        <begin position="112"/>
        <end position="120"/>
    </location>
</feature>
<feature type="helix" evidence="3">
    <location>
        <begin position="141"/>
        <end position="146"/>
    </location>
</feature>
<feature type="helix" evidence="3">
    <location>
        <begin position="155"/>
        <end position="168"/>
    </location>
</feature>
<feature type="helix" evidence="3">
    <location>
        <begin position="170"/>
        <end position="175"/>
    </location>
</feature>
<feature type="strand" evidence="3">
    <location>
        <begin position="180"/>
        <end position="184"/>
    </location>
</feature>
<feature type="helix" evidence="3">
    <location>
        <begin position="186"/>
        <end position="196"/>
    </location>
</feature>
<feature type="helix" evidence="3">
    <location>
        <begin position="201"/>
        <end position="205"/>
    </location>
</feature>
<feature type="strand" evidence="3">
    <location>
        <begin position="215"/>
        <end position="219"/>
    </location>
</feature>
<feature type="strand" evidence="3">
    <location>
        <begin position="225"/>
        <end position="227"/>
    </location>
</feature>
<feature type="strand" evidence="3">
    <location>
        <begin position="231"/>
        <end position="234"/>
    </location>
</feature>
<feature type="helix" evidence="3">
    <location>
        <begin position="235"/>
        <end position="243"/>
    </location>
</feature>
<keyword id="KW-0002">3D-structure</keyword>
<keyword id="KW-0312">Gluconeogenesis</keyword>
<keyword id="KW-0324">Glycolysis</keyword>
<keyword id="KW-0413">Isomerase</keyword>
<dbReference type="EC" id="5.4.2.11" evidence="2"/>
<dbReference type="EMBL" id="FM211192">
    <property type="protein sequence ID" value="CAR72540.1"/>
    <property type="molecule type" value="Genomic_DNA"/>
</dbReference>
<dbReference type="PDB" id="4EO9">
    <property type="method" value="X-ray"/>
    <property type="resolution" value="2.45 A"/>
    <property type="chains" value="A=1-247"/>
</dbReference>
<dbReference type="PDBsum" id="4EO9"/>
<dbReference type="SMR" id="B8ZT86"/>
<dbReference type="KEGG" id="mlb:MLBr02441"/>
<dbReference type="HOGENOM" id="CLU_033323_1_1_11"/>
<dbReference type="UniPathway" id="UPA00109">
    <property type="reaction ID" value="UER00186"/>
</dbReference>
<dbReference type="EvolutionaryTrace" id="B8ZT86"/>
<dbReference type="Proteomes" id="UP000006900">
    <property type="component" value="Chromosome"/>
</dbReference>
<dbReference type="GO" id="GO:0004619">
    <property type="term" value="F:phosphoglycerate mutase activity"/>
    <property type="evidence" value="ECO:0007669"/>
    <property type="project" value="UniProtKB-EC"/>
</dbReference>
<dbReference type="GO" id="GO:0006094">
    <property type="term" value="P:gluconeogenesis"/>
    <property type="evidence" value="ECO:0007669"/>
    <property type="project" value="UniProtKB-UniRule"/>
</dbReference>
<dbReference type="GO" id="GO:0006096">
    <property type="term" value="P:glycolytic process"/>
    <property type="evidence" value="ECO:0007669"/>
    <property type="project" value="UniProtKB-UniRule"/>
</dbReference>
<dbReference type="CDD" id="cd07067">
    <property type="entry name" value="HP_PGM_like"/>
    <property type="match status" value="1"/>
</dbReference>
<dbReference type="FunFam" id="3.40.50.1240:FF:000003">
    <property type="entry name" value="2,3-bisphosphoglycerate-dependent phosphoglycerate mutase"/>
    <property type="match status" value="1"/>
</dbReference>
<dbReference type="Gene3D" id="3.40.50.1240">
    <property type="entry name" value="Phosphoglycerate mutase-like"/>
    <property type="match status" value="1"/>
</dbReference>
<dbReference type="HAMAP" id="MF_01039">
    <property type="entry name" value="PGAM_GpmA"/>
    <property type="match status" value="1"/>
</dbReference>
<dbReference type="InterPro" id="IPR013078">
    <property type="entry name" value="His_Pase_superF_clade-1"/>
</dbReference>
<dbReference type="InterPro" id="IPR029033">
    <property type="entry name" value="His_PPase_superfam"/>
</dbReference>
<dbReference type="InterPro" id="IPR001345">
    <property type="entry name" value="PG/BPGM_mutase_AS"/>
</dbReference>
<dbReference type="InterPro" id="IPR005952">
    <property type="entry name" value="Phosphogly_mut1"/>
</dbReference>
<dbReference type="NCBIfam" id="TIGR01258">
    <property type="entry name" value="pgm_1"/>
    <property type="match status" value="1"/>
</dbReference>
<dbReference type="NCBIfam" id="NF010713">
    <property type="entry name" value="PRK14115.1"/>
    <property type="match status" value="1"/>
</dbReference>
<dbReference type="NCBIfam" id="NF010718">
    <property type="entry name" value="PRK14120.1"/>
    <property type="match status" value="1"/>
</dbReference>
<dbReference type="PANTHER" id="PTHR11931">
    <property type="entry name" value="PHOSPHOGLYCERATE MUTASE"/>
    <property type="match status" value="1"/>
</dbReference>
<dbReference type="Pfam" id="PF00300">
    <property type="entry name" value="His_Phos_1"/>
    <property type="match status" value="1"/>
</dbReference>
<dbReference type="PIRSF" id="PIRSF000709">
    <property type="entry name" value="6PFK_2-Ptase"/>
    <property type="match status" value="1"/>
</dbReference>
<dbReference type="SMART" id="SM00855">
    <property type="entry name" value="PGAM"/>
    <property type="match status" value="1"/>
</dbReference>
<dbReference type="SUPFAM" id="SSF53254">
    <property type="entry name" value="Phosphoglycerate mutase-like"/>
    <property type="match status" value="1"/>
</dbReference>
<dbReference type="PROSITE" id="PS00175">
    <property type="entry name" value="PG_MUTASE"/>
    <property type="match status" value="1"/>
</dbReference>